<dbReference type="EC" id="3.1.1.-"/>
<dbReference type="EMBL" id="AF080118">
    <property type="protein sequence ID" value="AAC33954.1"/>
    <property type="status" value="ALT_SEQ"/>
    <property type="molecule type" value="Genomic_DNA"/>
</dbReference>
<dbReference type="EMBL" id="AL049525">
    <property type="protein sequence ID" value="CAB40063.1"/>
    <property type="status" value="ALT_SEQ"/>
    <property type="molecule type" value="Genomic_DNA"/>
</dbReference>
<dbReference type="EMBL" id="AL161518">
    <property type="protein sequence ID" value="CAB81196.1"/>
    <property type="status" value="ALT_SEQ"/>
    <property type="molecule type" value="Genomic_DNA"/>
</dbReference>
<dbReference type="EMBL" id="CP002687">
    <property type="protein sequence ID" value="AEE82952.1"/>
    <property type="molecule type" value="Genomic_DNA"/>
</dbReference>
<dbReference type="EMBL" id="CP002687">
    <property type="protein sequence ID" value="AEE82953.1"/>
    <property type="molecule type" value="Genomic_DNA"/>
</dbReference>
<dbReference type="EMBL" id="AY140073">
    <property type="status" value="NOT_ANNOTATED_CDS"/>
    <property type="molecule type" value="mRNA"/>
</dbReference>
<dbReference type="EMBL" id="AK175282">
    <property type="protein sequence ID" value="BAD43045.1"/>
    <property type="molecule type" value="mRNA"/>
</dbReference>
<dbReference type="EMBL" id="AK175947">
    <property type="protein sequence ID" value="BAD43710.1"/>
    <property type="molecule type" value="mRNA"/>
</dbReference>
<dbReference type="PIR" id="T01882">
    <property type="entry name" value="T01882"/>
</dbReference>
<dbReference type="PIR" id="T04290">
    <property type="entry name" value="T04290"/>
</dbReference>
<dbReference type="RefSeq" id="NP_001190699.1">
    <molecule id="Q680C0-1"/>
    <property type="nucleotide sequence ID" value="NM_001203770.2"/>
</dbReference>
<dbReference type="RefSeq" id="NP_001319899.1">
    <molecule id="Q680C0-1"/>
    <property type="nucleotide sequence ID" value="NM_001340697.1"/>
</dbReference>
<dbReference type="FunCoup" id="Q680C0">
    <property type="interactions" value="521"/>
</dbReference>
<dbReference type="STRING" id="3702.Q680C0"/>
<dbReference type="ESTHER" id="arath-GDL62">
    <property type="family name" value="Lipase_3"/>
</dbReference>
<dbReference type="PaxDb" id="3702-AT4G10955.1"/>
<dbReference type="ProteomicsDB" id="221983">
    <molecule id="Q680C0-1"/>
</dbReference>
<dbReference type="EnsemblPlants" id="AT4G10955.1">
    <molecule id="Q680C0-1"/>
    <property type="protein sequence ID" value="AT4G10955.1"/>
    <property type="gene ID" value="AT4G10955"/>
</dbReference>
<dbReference type="EnsemblPlants" id="AT4G10955.2">
    <molecule id="Q680C0-1"/>
    <property type="protein sequence ID" value="AT4G10955.2"/>
    <property type="gene ID" value="AT4G10955"/>
</dbReference>
<dbReference type="GeneID" id="826695"/>
<dbReference type="Gramene" id="AT4G10955.1">
    <molecule id="Q680C0-1"/>
    <property type="protein sequence ID" value="AT4G10955.1"/>
    <property type="gene ID" value="AT4G10955"/>
</dbReference>
<dbReference type="Gramene" id="AT4G10955.2">
    <molecule id="Q680C0-1"/>
    <property type="protein sequence ID" value="AT4G10955.2"/>
    <property type="gene ID" value="AT4G10955"/>
</dbReference>
<dbReference type="KEGG" id="ath:AT4G10955"/>
<dbReference type="Araport" id="AT4G10955"/>
<dbReference type="TAIR" id="AT4G10955"/>
<dbReference type="eggNOG" id="ENOG502QWRG">
    <property type="taxonomic scope" value="Eukaryota"/>
</dbReference>
<dbReference type="HOGENOM" id="CLU_042725_2_1_1"/>
<dbReference type="InParanoid" id="Q680C0"/>
<dbReference type="OMA" id="MTAMGKE"/>
<dbReference type="OrthoDB" id="58570at2759"/>
<dbReference type="PhylomeDB" id="Q680C0"/>
<dbReference type="PRO" id="PR:Q680C0"/>
<dbReference type="Proteomes" id="UP000006548">
    <property type="component" value="Chromosome 4"/>
</dbReference>
<dbReference type="ExpressionAtlas" id="Q680C0">
    <property type="expression patterns" value="baseline and differential"/>
</dbReference>
<dbReference type="GO" id="GO:0016787">
    <property type="term" value="F:hydrolase activity"/>
    <property type="evidence" value="ECO:0007669"/>
    <property type="project" value="UniProtKB-KW"/>
</dbReference>
<dbReference type="GO" id="GO:0016042">
    <property type="term" value="P:lipid catabolic process"/>
    <property type="evidence" value="ECO:0007669"/>
    <property type="project" value="UniProtKB-KW"/>
</dbReference>
<dbReference type="Gene3D" id="3.40.50.1820">
    <property type="entry name" value="alpha/beta hydrolase"/>
    <property type="match status" value="1"/>
</dbReference>
<dbReference type="InterPro" id="IPR029058">
    <property type="entry name" value="AB_hydrolase_fold"/>
</dbReference>
<dbReference type="InterPro" id="IPR002921">
    <property type="entry name" value="Fungal_lipase-type"/>
</dbReference>
<dbReference type="PANTHER" id="PTHR31479">
    <property type="entry name" value="ALPHA/BETA-HYDROLASES SUPERFAMILY PROTEIN"/>
    <property type="match status" value="1"/>
</dbReference>
<dbReference type="PANTHER" id="PTHR31479:SF2">
    <property type="entry name" value="ALPHA_BETA-HYDROLASES SUPERFAMILY PROTEIN"/>
    <property type="match status" value="1"/>
</dbReference>
<dbReference type="Pfam" id="PF01764">
    <property type="entry name" value="Lipase_3"/>
    <property type="match status" value="1"/>
</dbReference>
<dbReference type="SUPFAM" id="SSF53474">
    <property type="entry name" value="alpha/beta-Hydrolases"/>
    <property type="match status" value="1"/>
</dbReference>
<accession>Q680C0</accession>
<accession>O81620</accession>
<accession>Q682T5</accession>
<accession>Q9SN59</accession>
<keyword id="KW-0025">Alternative splicing</keyword>
<keyword id="KW-0378">Hydrolase</keyword>
<keyword id="KW-0442">Lipid degradation</keyword>
<keyword id="KW-0443">Lipid metabolism</keyword>
<keyword id="KW-1185">Reference proteome</keyword>
<comment type="alternative products">
    <event type="alternative splicing"/>
    <isoform>
        <id>Q680C0-1</id>
        <name>1</name>
        <sequence type="displayed"/>
    </isoform>
    <isoform>
        <id>Q680C0-2</id>
        <name>2</name>
        <sequence type="described" ref="VSP_036695"/>
    </isoform>
</comment>
<comment type="similarity">
    <text evidence="2">Belongs to the 'GDSL' lipolytic enzyme family.</text>
</comment>
<comment type="caution">
    <text evidence="2">Lacks the conserved active site 'GDSL' motif. Its enzyme activity is therefore unsure.</text>
</comment>
<comment type="sequence caution" evidence="2">
    <conflict type="erroneous gene model prediction">
        <sequence resource="EMBL-CDS" id="AAC33954"/>
    </conflict>
</comment>
<comment type="sequence caution" evidence="2">
    <conflict type="erroneous gene model prediction">
        <sequence resource="EMBL-CDS" id="CAB40063"/>
    </conflict>
</comment>
<comment type="sequence caution" evidence="2">
    <conflict type="erroneous gene model prediction">
        <sequence resource="EMBL-CDS" id="CAB81196"/>
    </conflict>
</comment>
<sequence length="350" mass="39474">MMISERDDFSLTGPLHLTSIDWANEHHRRSVAGSLVQGIYVAERDRQLQREGPELALSPIWSEFFHFRLIRKFVDDADNSIFGGIYEYKLPQQLSQTVKSMEFSPRFVIAFRGTVTKVDSISRDIEHDIHVIRNGLHTTTRFEIAIQAVRNIVASVGGSSVWLAGHSLGASMALLTGKTIARTGFFPECFAFNPPFLSAPIEKIKDKRIKHGIRIAGSVITAGLALAKKATQHYSQNDRALPAPPDPFEALSDWFPRLYVNPGDHLCSEYVGYFEHRNKMEEIGIGFVERVATQHSLGGMLLGGQEPVHLIPSSVLTVNLSSSRDFKQAHGIHQWWREDNKFETKVYQYK</sequence>
<protein>
    <recommendedName>
        <fullName>GDSL esterase/lipase At4g10955</fullName>
        <ecNumber>3.1.1.-</ecNumber>
    </recommendedName>
</protein>
<organism>
    <name type="scientific">Arabidopsis thaliana</name>
    <name type="common">Mouse-ear cress</name>
    <dbReference type="NCBI Taxonomy" id="3702"/>
    <lineage>
        <taxon>Eukaryota</taxon>
        <taxon>Viridiplantae</taxon>
        <taxon>Streptophyta</taxon>
        <taxon>Embryophyta</taxon>
        <taxon>Tracheophyta</taxon>
        <taxon>Spermatophyta</taxon>
        <taxon>Magnoliopsida</taxon>
        <taxon>eudicotyledons</taxon>
        <taxon>Gunneridae</taxon>
        <taxon>Pentapetalae</taxon>
        <taxon>rosids</taxon>
        <taxon>malvids</taxon>
        <taxon>Brassicales</taxon>
        <taxon>Brassicaceae</taxon>
        <taxon>Camelineae</taxon>
        <taxon>Arabidopsis</taxon>
    </lineage>
</organism>
<name>GDL62_ARATH</name>
<evidence type="ECO:0000303" key="1">
    <source ref="4"/>
</evidence>
<evidence type="ECO:0000305" key="2"/>
<proteinExistence type="evidence at transcript level"/>
<gene>
    <name type="ordered locus">At4g10955</name>
    <name type="ORF">F25I24.160</name>
    <name type="ORF">F8M12.9</name>
</gene>
<feature type="chain" id="PRO_0000367403" description="GDSL esterase/lipase At4g10955">
    <location>
        <begin position="1"/>
        <end position="350"/>
    </location>
</feature>
<feature type="splice variant" id="VSP_036695" description="In isoform 2." evidence="1">
    <location>
        <begin position="1"/>
        <end position="100"/>
    </location>
</feature>
<reference key="1">
    <citation type="journal article" date="1999" name="Nature">
        <title>Sequence and analysis of chromosome 4 of the plant Arabidopsis thaliana.</title>
        <authorList>
            <person name="Mayer K.F.X."/>
            <person name="Schueller C."/>
            <person name="Wambutt R."/>
            <person name="Murphy G."/>
            <person name="Volckaert G."/>
            <person name="Pohl T."/>
            <person name="Duesterhoeft A."/>
            <person name="Stiekema W."/>
            <person name="Entian K.-D."/>
            <person name="Terryn N."/>
            <person name="Harris B."/>
            <person name="Ansorge W."/>
            <person name="Brandt P."/>
            <person name="Grivell L.A."/>
            <person name="Rieger M."/>
            <person name="Weichselgartner M."/>
            <person name="de Simone V."/>
            <person name="Obermaier B."/>
            <person name="Mache R."/>
            <person name="Mueller M."/>
            <person name="Kreis M."/>
            <person name="Delseny M."/>
            <person name="Puigdomenech P."/>
            <person name="Watson M."/>
            <person name="Schmidtheini T."/>
            <person name="Reichert B."/>
            <person name="Portetelle D."/>
            <person name="Perez-Alonso M."/>
            <person name="Boutry M."/>
            <person name="Bancroft I."/>
            <person name="Vos P."/>
            <person name="Hoheisel J."/>
            <person name="Zimmermann W."/>
            <person name="Wedler H."/>
            <person name="Ridley P."/>
            <person name="Langham S.-A."/>
            <person name="McCullagh B."/>
            <person name="Bilham L."/>
            <person name="Robben J."/>
            <person name="van der Schueren J."/>
            <person name="Grymonprez B."/>
            <person name="Chuang Y.-J."/>
            <person name="Vandenbussche F."/>
            <person name="Braeken M."/>
            <person name="Weltjens I."/>
            <person name="Voet M."/>
            <person name="Bastiaens I."/>
            <person name="Aert R."/>
            <person name="Defoor E."/>
            <person name="Weitzenegger T."/>
            <person name="Bothe G."/>
            <person name="Ramsperger U."/>
            <person name="Hilbert H."/>
            <person name="Braun M."/>
            <person name="Holzer E."/>
            <person name="Brandt A."/>
            <person name="Peters S."/>
            <person name="van Staveren M."/>
            <person name="Dirkse W."/>
            <person name="Mooijman P."/>
            <person name="Klein Lankhorst R."/>
            <person name="Rose M."/>
            <person name="Hauf J."/>
            <person name="Koetter P."/>
            <person name="Berneiser S."/>
            <person name="Hempel S."/>
            <person name="Feldpausch M."/>
            <person name="Lamberth S."/>
            <person name="Van den Daele H."/>
            <person name="De Keyser A."/>
            <person name="Buysshaert C."/>
            <person name="Gielen J."/>
            <person name="Villarroel R."/>
            <person name="De Clercq R."/>
            <person name="van Montagu M."/>
            <person name="Rogers J."/>
            <person name="Cronin A."/>
            <person name="Quail M.A."/>
            <person name="Bray-Allen S."/>
            <person name="Clark L."/>
            <person name="Doggett J."/>
            <person name="Hall S."/>
            <person name="Kay M."/>
            <person name="Lennard N."/>
            <person name="McLay K."/>
            <person name="Mayes R."/>
            <person name="Pettett A."/>
            <person name="Rajandream M.A."/>
            <person name="Lyne M."/>
            <person name="Benes V."/>
            <person name="Rechmann S."/>
            <person name="Borkova D."/>
            <person name="Bloecker H."/>
            <person name="Scharfe M."/>
            <person name="Grimm M."/>
            <person name="Loehnert T.-H."/>
            <person name="Dose S."/>
            <person name="de Haan M."/>
            <person name="Maarse A.C."/>
            <person name="Schaefer M."/>
            <person name="Mueller-Auer S."/>
            <person name="Gabel C."/>
            <person name="Fuchs M."/>
            <person name="Fartmann B."/>
            <person name="Granderath K."/>
            <person name="Dauner D."/>
            <person name="Herzl A."/>
            <person name="Neumann S."/>
            <person name="Argiriou A."/>
            <person name="Vitale D."/>
            <person name="Liguori R."/>
            <person name="Piravandi E."/>
            <person name="Massenet O."/>
            <person name="Quigley F."/>
            <person name="Clabauld G."/>
            <person name="Muendlein A."/>
            <person name="Felber R."/>
            <person name="Schnabl S."/>
            <person name="Hiller R."/>
            <person name="Schmidt W."/>
            <person name="Lecharny A."/>
            <person name="Aubourg S."/>
            <person name="Chefdor F."/>
            <person name="Cooke R."/>
            <person name="Berger C."/>
            <person name="Monfort A."/>
            <person name="Casacuberta E."/>
            <person name="Gibbons T."/>
            <person name="Weber N."/>
            <person name="Vandenbol M."/>
            <person name="Bargues M."/>
            <person name="Terol J."/>
            <person name="Torres A."/>
            <person name="Perez-Perez A."/>
            <person name="Purnelle B."/>
            <person name="Bent E."/>
            <person name="Johnson S."/>
            <person name="Tacon D."/>
            <person name="Jesse T."/>
            <person name="Heijnen L."/>
            <person name="Schwarz S."/>
            <person name="Scholler P."/>
            <person name="Heber S."/>
            <person name="Francs P."/>
            <person name="Bielke C."/>
            <person name="Frishman D."/>
            <person name="Haase D."/>
            <person name="Lemcke K."/>
            <person name="Mewes H.-W."/>
            <person name="Stocker S."/>
            <person name="Zaccaria P."/>
            <person name="Bevan M."/>
            <person name="Wilson R.K."/>
            <person name="de la Bastide M."/>
            <person name="Habermann K."/>
            <person name="Parnell L."/>
            <person name="Dedhia N."/>
            <person name="Gnoj L."/>
            <person name="Schutz K."/>
            <person name="Huang E."/>
            <person name="Spiegel L."/>
            <person name="Sekhon M."/>
            <person name="Murray J."/>
            <person name="Sheet P."/>
            <person name="Cordes M."/>
            <person name="Abu-Threideh J."/>
            <person name="Stoneking T."/>
            <person name="Kalicki J."/>
            <person name="Graves T."/>
            <person name="Harmon G."/>
            <person name="Edwards J."/>
            <person name="Latreille P."/>
            <person name="Courtney L."/>
            <person name="Cloud J."/>
            <person name="Abbott A."/>
            <person name="Scott K."/>
            <person name="Johnson D."/>
            <person name="Minx P."/>
            <person name="Bentley D."/>
            <person name="Fulton B."/>
            <person name="Miller N."/>
            <person name="Greco T."/>
            <person name="Kemp K."/>
            <person name="Kramer J."/>
            <person name="Fulton L."/>
            <person name="Mardis E."/>
            <person name="Dante M."/>
            <person name="Pepin K."/>
            <person name="Hillier L.W."/>
            <person name="Nelson J."/>
            <person name="Spieth J."/>
            <person name="Ryan E."/>
            <person name="Andrews S."/>
            <person name="Geisel C."/>
            <person name="Layman D."/>
            <person name="Du H."/>
            <person name="Ali J."/>
            <person name="Berghoff A."/>
            <person name="Jones K."/>
            <person name="Drone K."/>
            <person name="Cotton M."/>
            <person name="Joshu C."/>
            <person name="Antonoiu B."/>
            <person name="Zidanic M."/>
            <person name="Strong C."/>
            <person name="Sun H."/>
            <person name="Lamar B."/>
            <person name="Yordan C."/>
            <person name="Ma P."/>
            <person name="Zhong J."/>
            <person name="Preston R."/>
            <person name="Vil D."/>
            <person name="Shekher M."/>
            <person name="Matero A."/>
            <person name="Shah R."/>
            <person name="Swaby I.K."/>
            <person name="O'Shaughnessy A."/>
            <person name="Rodriguez M."/>
            <person name="Hoffman J."/>
            <person name="Till S."/>
            <person name="Granat S."/>
            <person name="Shohdy N."/>
            <person name="Hasegawa A."/>
            <person name="Hameed A."/>
            <person name="Lodhi M."/>
            <person name="Johnson A."/>
            <person name="Chen E."/>
            <person name="Marra M.A."/>
            <person name="Martienssen R."/>
            <person name="McCombie W.R."/>
        </authorList>
    </citation>
    <scope>NUCLEOTIDE SEQUENCE [LARGE SCALE GENOMIC DNA]</scope>
    <source>
        <strain>cv. Columbia</strain>
    </source>
</reference>
<reference key="2">
    <citation type="journal article" date="2017" name="Plant J.">
        <title>Araport11: a complete reannotation of the Arabidopsis thaliana reference genome.</title>
        <authorList>
            <person name="Cheng C.Y."/>
            <person name="Krishnakumar V."/>
            <person name="Chan A.P."/>
            <person name="Thibaud-Nissen F."/>
            <person name="Schobel S."/>
            <person name="Town C.D."/>
        </authorList>
    </citation>
    <scope>GENOME REANNOTATION</scope>
    <source>
        <strain>cv. Columbia</strain>
    </source>
</reference>
<reference key="3">
    <citation type="journal article" date="2003" name="Science">
        <title>Empirical analysis of transcriptional activity in the Arabidopsis genome.</title>
        <authorList>
            <person name="Yamada K."/>
            <person name="Lim J."/>
            <person name="Dale J.M."/>
            <person name="Chen H."/>
            <person name="Shinn P."/>
            <person name="Palm C.J."/>
            <person name="Southwick A.M."/>
            <person name="Wu H.C."/>
            <person name="Kim C.J."/>
            <person name="Nguyen M."/>
            <person name="Pham P.K."/>
            <person name="Cheuk R.F."/>
            <person name="Karlin-Newmann G."/>
            <person name="Liu S.X."/>
            <person name="Lam B."/>
            <person name="Sakano H."/>
            <person name="Wu T."/>
            <person name="Yu G."/>
            <person name="Miranda M."/>
            <person name="Quach H.L."/>
            <person name="Tripp M."/>
            <person name="Chang C.H."/>
            <person name="Lee J.M."/>
            <person name="Toriumi M.J."/>
            <person name="Chan M.M."/>
            <person name="Tang C.C."/>
            <person name="Onodera C.S."/>
            <person name="Deng J.M."/>
            <person name="Akiyama K."/>
            <person name="Ansari Y."/>
            <person name="Arakawa T."/>
            <person name="Banh J."/>
            <person name="Banno F."/>
            <person name="Bowser L."/>
            <person name="Brooks S.Y."/>
            <person name="Carninci P."/>
            <person name="Chao Q."/>
            <person name="Choy N."/>
            <person name="Enju A."/>
            <person name="Goldsmith A.D."/>
            <person name="Gurjal M."/>
            <person name="Hansen N.F."/>
            <person name="Hayashizaki Y."/>
            <person name="Johnson-Hopson C."/>
            <person name="Hsuan V.W."/>
            <person name="Iida K."/>
            <person name="Karnes M."/>
            <person name="Khan S."/>
            <person name="Koesema E."/>
            <person name="Ishida J."/>
            <person name="Jiang P.X."/>
            <person name="Jones T."/>
            <person name="Kawai J."/>
            <person name="Kamiya A."/>
            <person name="Meyers C."/>
            <person name="Nakajima M."/>
            <person name="Narusaka M."/>
            <person name="Seki M."/>
            <person name="Sakurai T."/>
            <person name="Satou M."/>
            <person name="Tamse R."/>
            <person name="Vaysberg M."/>
            <person name="Wallender E.K."/>
            <person name="Wong C."/>
            <person name="Yamamura Y."/>
            <person name="Yuan S."/>
            <person name="Shinozaki K."/>
            <person name="Davis R.W."/>
            <person name="Theologis A."/>
            <person name="Ecker J.R."/>
        </authorList>
    </citation>
    <scope>NUCLEOTIDE SEQUENCE [LARGE SCALE MRNA] (ISOFORM 1)</scope>
    <source>
        <strain>cv. Columbia</strain>
    </source>
</reference>
<reference key="4">
    <citation type="submission" date="2004-09" db="EMBL/GenBank/DDBJ databases">
        <title>Large-scale analysis of RIKEN Arabidopsis full-length (RAFL) cDNAs.</title>
        <authorList>
            <person name="Totoki Y."/>
            <person name="Seki M."/>
            <person name="Ishida J."/>
            <person name="Nakajima M."/>
            <person name="Enju A."/>
            <person name="Kamiya A."/>
            <person name="Narusaka M."/>
            <person name="Shin-i T."/>
            <person name="Nakagawa M."/>
            <person name="Sakamoto N."/>
            <person name="Oishi K."/>
            <person name="Kohara Y."/>
            <person name="Kobayashi M."/>
            <person name="Toyoda A."/>
            <person name="Sakaki Y."/>
            <person name="Sakurai T."/>
            <person name="Iida K."/>
            <person name="Akiyama K."/>
            <person name="Satou M."/>
            <person name="Toyoda T."/>
            <person name="Konagaya A."/>
            <person name="Carninci P."/>
            <person name="Kawai J."/>
            <person name="Hayashizaki Y."/>
            <person name="Shinozaki K."/>
        </authorList>
    </citation>
    <scope>NUCLEOTIDE SEQUENCE [LARGE SCALE MRNA] (ISOFORMS 1 AND 2)</scope>
    <source>
        <strain>cv. Columbia</strain>
    </source>
</reference>
<reference key="5">
    <citation type="journal article" date="2004" name="Prog. Lipid Res.">
        <title>GDSL family of serine esterases/lipases.</title>
        <authorList>
            <person name="Akoh C.C."/>
            <person name="Lee G.-C."/>
            <person name="Liaw Y.-C."/>
            <person name="Huang T.-H."/>
            <person name="Shaw J.-F."/>
        </authorList>
    </citation>
    <scope>REVIEW</scope>
</reference>
<reference key="6">
    <citation type="journal article" date="2008" name="Pak. J. Biol. Sci.">
        <title>Sequence analysis of GDSL lipase gene family in Arabidopsis thaliana.</title>
        <authorList>
            <person name="Ling H."/>
        </authorList>
    </citation>
    <scope>GENE FAMILY</scope>
</reference>